<dbReference type="EC" id="2.7.7.6" evidence="1"/>
<dbReference type="EMBL" id="CP000746">
    <property type="protein sequence ID" value="ABR73421.1"/>
    <property type="molecule type" value="Genomic_DNA"/>
</dbReference>
<dbReference type="RefSeq" id="WP_011978697.1">
    <property type="nucleotide sequence ID" value="NC_009655.1"/>
</dbReference>
<dbReference type="SMR" id="A6VKC4"/>
<dbReference type="STRING" id="339671.Asuc_0040"/>
<dbReference type="KEGG" id="asu:Asuc_0040"/>
<dbReference type="eggNOG" id="COG0086">
    <property type="taxonomic scope" value="Bacteria"/>
</dbReference>
<dbReference type="HOGENOM" id="CLU_000524_3_1_6"/>
<dbReference type="OrthoDB" id="9815296at2"/>
<dbReference type="Proteomes" id="UP000001114">
    <property type="component" value="Chromosome"/>
</dbReference>
<dbReference type="GO" id="GO:0000428">
    <property type="term" value="C:DNA-directed RNA polymerase complex"/>
    <property type="evidence" value="ECO:0007669"/>
    <property type="project" value="UniProtKB-KW"/>
</dbReference>
<dbReference type="GO" id="GO:0003677">
    <property type="term" value="F:DNA binding"/>
    <property type="evidence" value="ECO:0007669"/>
    <property type="project" value="UniProtKB-UniRule"/>
</dbReference>
<dbReference type="GO" id="GO:0003899">
    <property type="term" value="F:DNA-directed RNA polymerase activity"/>
    <property type="evidence" value="ECO:0007669"/>
    <property type="project" value="UniProtKB-UniRule"/>
</dbReference>
<dbReference type="GO" id="GO:0000287">
    <property type="term" value="F:magnesium ion binding"/>
    <property type="evidence" value="ECO:0007669"/>
    <property type="project" value="UniProtKB-UniRule"/>
</dbReference>
<dbReference type="GO" id="GO:0008270">
    <property type="term" value="F:zinc ion binding"/>
    <property type="evidence" value="ECO:0007669"/>
    <property type="project" value="UniProtKB-UniRule"/>
</dbReference>
<dbReference type="GO" id="GO:0006351">
    <property type="term" value="P:DNA-templated transcription"/>
    <property type="evidence" value="ECO:0007669"/>
    <property type="project" value="UniProtKB-UniRule"/>
</dbReference>
<dbReference type="CDD" id="cd02655">
    <property type="entry name" value="RNAP_beta'_C"/>
    <property type="match status" value="1"/>
</dbReference>
<dbReference type="CDD" id="cd01609">
    <property type="entry name" value="RNAP_beta'_N"/>
    <property type="match status" value="1"/>
</dbReference>
<dbReference type="FunFam" id="1.10.132.30:FF:000003">
    <property type="entry name" value="DNA-directed RNA polymerase subunit beta"/>
    <property type="match status" value="1"/>
</dbReference>
<dbReference type="FunFam" id="1.10.150.390:FF:000002">
    <property type="entry name" value="DNA-directed RNA polymerase subunit beta"/>
    <property type="match status" value="1"/>
</dbReference>
<dbReference type="FunFam" id="4.10.860.120:FF:000001">
    <property type="entry name" value="DNA-directed RNA polymerase subunit beta"/>
    <property type="match status" value="1"/>
</dbReference>
<dbReference type="Gene3D" id="1.10.132.30">
    <property type="match status" value="1"/>
</dbReference>
<dbReference type="Gene3D" id="1.10.150.390">
    <property type="match status" value="1"/>
</dbReference>
<dbReference type="Gene3D" id="1.10.1790.20">
    <property type="match status" value="1"/>
</dbReference>
<dbReference type="Gene3D" id="1.10.40.90">
    <property type="match status" value="1"/>
</dbReference>
<dbReference type="Gene3D" id="2.40.40.20">
    <property type="match status" value="1"/>
</dbReference>
<dbReference type="Gene3D" id="2.40.50.100">
    <property type="match status" value="3"/>
</dbReference>
<dbReference type="Gene3D" id="4.10.860.120">
    <property type="entry name" value="RNA polymerase II, clamp domain"/>
    <property type="match status" value="1"/>
</dbReference>
<dbReference type="Gene3D" id="1.10.274.100">
    <property type="entry name" value="RNA polymerase Rpb1, domain 3"/>
    <property type="match status" value="1"/>
</dbReference>
<dbReference type="HAMAP" id="MF_01322">
    <property type="entry name" value="RNApol_bact_RpoC"/>
    <property type="match status" value="1"/>
</dbReference>
<dbReference type="InterPro" id="IPR045867">
    <property type="entry name" value="DNA-dir_RpoC_beta_prime"/>
</dbReference>
<dbReference type="InterPro" id="IPR012754">
    <property type="entry name" value="DNA-dir_RpoC_beta_prime_bact"/>
</dbReference>
<dbReference type="InterPro" id="IPR000722">
    <property type="entry name" value="RNA_pol_asu"/>
</dbReference>
<dbReference type="InterPro" id="IPR006592">
    <property type="entry name" value="RNA_pol_N"/>
</dbReference>
<dbReference type="InterPro" id="IPR007080">
    <property type="entry name" value="RNA_pol_Rpb1_1"/>
</dbReference>
<dbReference type="InterPro" id="IPR007066">
    <property type="entry name" value="RNA_pol_Rpb1_3"/>
</dbReference>
<dbReference type="InterPro" id="IPR042102">
    <property type="entry name" value="RNA_pol_Rpb1_3_sf"/>
</dbReference>
<dbReference type="InterPro" id="IPR007083">
    <property type="entry name" value="RNA_pol_Rpb1_4"/>
</dbReference>
<dbReference type="InterPro" id="IPR007081">
    <property type="entry name" value="RNA_pol_Rpb1_5"/>
</dbReference>
<dbReference type="InterPro" id="IPR044893">
    <property type="entry name" value="RNA_pol_Rpb1_clamp_domain"/>
</dbReference>
<dbReference type="InterPro" id="IPR038120">
    <property type="entry name" value="Rpb1_funnel_sf"/>
</dbReference>
<dbReference type="NCBIfam" id="TIGR02386">
    <property type="entry name" value="rpoC_TIGR"/>
    <property type="match status" value="1"/>
</dbReference>
<dbReference type="PANTHER" id="PTHR19376">
    <property type="entry name" value="DNA-DIRECTED RNA POLYMERASE"/>
    <property type="match status" value="1"/>
</dbReference>
<dbReference type="PANTHER" id="PTHR19376:SF54">
    <property type="entry name" value="DNA-DIRECTED RNA POLYMERASE SUBUNIT BETA"/>
    <property type="match status" value="1"/>
</dbReference>
<dbReference type="Pfam" id="PF04997">
    <property type="entry name" value="RNA_pol_Rpb1_1"/>
    <property type="match status" value="1"/>
</dbReference>
<dbReference type="Pfam" id="PF00623">
    <property type="entry name" value="RNA_pol_Rpb1_2"/>
    <property type="match status" value="2"/>
</dbReference>
<dbReference type="Pfam" id="PF04983">
    <property type="entry name" value="RNA_pol_Rpb1_3"/>
    <property type="match status" value="1"/>
</dbReference>
<dbReference type="Pfam" id="PF05000">
    <property type="entry name" value="RNA_pol_Rpb1_4"/>
    <property type="match status" value="1"/>
</dbReference>
<dbReference type="Pfam" id="PF04998">
    <property type="entry name" value="RNA_pol_Rpb1_5"/>
    <property type="match status" value="1"/>
</dbReference>
<dbReference type="SMART" id="SM00663">
    <property type="entry name" value="RPOLA_N"/>
    <property type="match status" value="1"/>
</dbReference>
<dbReference type="SUPFAM" id="SSF64484">
    <property type="entry name" value="beta and beta-prime subunits of DNA dependent RNA-polymerase"/>
    <property type="match status" value="1"/>
</dbReference>
<organism>
    <name type="scientific">Actinobacillus succinogenes (strain ATCC 55618 / DSM 22257 / CCUG 43843 / 130Z)</name>
    <dbReference type="NCBI Taxonomy" id="339671"/>
    <lineage>
        <taxon>Bacteria</taxon>
        <taxon>Pseudomonadati</taxon>
        <taxon>Pseudomonadota</taxon>
        <taxon>Gammaproteobacteria</taxon>
        <taxon>Pasteurellales</taxon>
        <taxon>Pasteurellaceae</taxon>
        <taxon>Actinobacillus</taxon>
    </lineage>
</organism>
<feature type="chain" id="PRO_0000353279" description="DNA-directed RNA polymerase subunit beta'">
    <location>
        <begin position="1"/>
        <end position="1419"/>
    </location>
</feature>
<feature type="binding site" evidence="1">
    <location>
        <position position="71"/>
    </location>
    <ligand>
        <name>Zn(2+)</name>
        <dbReference type="ChEBI" id="CHEBI:29105"/>
        <label>1</label>
    </ligand>
</feature>
<feature type="binding site" evidence="1">
    <location>
        <position position="73"/>
    </location>
    <ligand>
        <name>Zn(2+)</name>
        <dbReference type="ChEBI" id="CHEBI:29105"/>
        <label>1</label>
    </ligand>
</feature>
<feature type="binding site" evidence="1">
    <location>
        <position position="86"/>
    </location>
    <ligand>
        <name>Zn(2+)</name>
        <dbReference type="ChEBI" id="CHEBI:29105"/>
        <label>1</label>
    </ligand>
</feature>
<feature type="binding site" evidence="1">
    <location>
        <position position="89"/>
    </location>
    <ligand>
        <name>Zn(2+)</name>
        <dbReference type="ChEBI" id="CHEBI:29105"/>
        <label>1</label>
    </ligand>
</feature>
<feature type="binding site" evidence="1">
    <location>
        <position position="461"/>
    </location>
    <ligand>
        <name>Mg(2+)</name>
        <dbReference type="ChEBI" id="CHEBI:18420"/>
    </ligand>
</feature>
<feature type="binding site" evidence="1">
    <location>
        <position position="463"/>
    </location>
    <ligand>
        <name>Mg(2+)</name>
        <dbReference type="ChEBI" id="CHEBI:18420"/>
    </ligand>
</feature>
<feature type="binding site" evidence="1">
    <location>
        <position position="465"/>
    </location>
    <ligand>
        <name>Mg(2+)</name>
        <dbReference type="ChEBI" id="CHEBI:18420"/>
    </ligand>
</feature>
<feature type="binding site" evidence="1">
    <location>
        <position position="815"/>
    </location>
    <ligand>
        <name>Zn(2+)</name>
        <dbReference type="ChEBI" id="CHEBI:29105"/>
        <label>2</label>
    </ligand>
</feature>
<feature type="binding site" evidence="1">
    <location>
        <position position="889"/>
    </location>
    <ligand>
        <name>Zn(2+)</name>
        <dbReference type="ChEBI" id="CHEBI:29105"/>
        <label>2</label>
    </ligand>
</feature>
<feature type="binding site" evidence="1">
    <location>
        <position position="896"/>
    </location>
    <ligand>
        <name>Zn(2+)</name>
        <dbReference type="ChEBI" id="CHEBI:29105"/>
        <label>2</label>
    </ligand>
</feature>
<feature type="binding site" evidence="1">
    <location>
        <position position="899"/>
    </location>
    <ligand>
        <name>Zn(2+)</name>
        <dbReference type="ChEBI" id="CHEBI:29105"/>
        <label>2</label>
    </ligand>
</feature>
<accession>A6VKC4</accession>
<reference key="1">
    <citation type="journal article" date="2010" name="BMC Genomics">
        <title>A genomic perspective on the potential of Actinobacillus succinogenes for industrial succinate production.</title>
        <authorList>
            <person name="McKinlay J.B."/>
            <person name="Laivenieks M."/>
            <person name="Schindler B.D."/>
            <person name="McKinlay A.A."/>
            <person name="Siddaramappa S."/>
            <person name="Challacombe J.F."/>
            <person name="Lowry S.R."/>
            <person name="Clum A."/>
            <person name="Lapidus A.L."/>
            <person name="Burkhart K.B."/>
            <person name="Harkins V."/>
            <person name="Vieille C."/>
        </authorList>
    </citation>
    <scope>NUCLEOTIDE SEQUENCE [LARGE SCALE GENOMIC DNA]</scope>
    <source>
        <strain>ATCC 55618 / DSM 22257 / CCUG 43843 / 130Z</strain>
    </source>
</reference>
<sequence>MKDLVNFLKAQSKTAEDFDVIKIGLASPDMIRSWSFGEVKKPETINYRTFKPERDGLFCARIFGPVKDYECLCGKYKRLKHRGVICEKCGVEVTQTKVRRERMGHIELASPVAHIWFLKSLPSRIGLLLDMPLRDIERVLYFESYIVIEPGMTDLEKGQLLTEEQYLDAEERWADEFEAKMGAEAIQSILRDMDLEHECEVLREELQETNSETKRKKITKRLKLLEAFIQSGNKPEWMVMTVLPVLPPDLRPLVPLDGGRFATSDLNDLYRRVINRNNRLKRLLDLVAPDIIVRNEKRMLQESVDALLDNGRRGRAITGSNRRPLKSLADMIKGKQGRFRQNLLGKRVDYSGRSVITVGPYLHLHQCGLPKKMALELFRPFIYAKLESRGYATTIKAAKKMVEREDVIVWDILAEVIREHPILLNRAPTLHRLGIQAFEPILIEGKAIQLHPLVCAAFNADFDGDQMAVHVPLTLEAQLEARALMMSTNNILSPANGDPIIVPSQDVVLGIYYMTRDKVNGKGEGMLLQDPREAEKAYRTGRAELHSRVKIRITEYVKNAEGEFEPQTNLVDTTVGRAILWMIAPKGMPFNLFNQTLGKKAISKLINECYRRLGMKESVMFADQIMYTGFAYAARSGSSVGIDDMVIPEKKYEIIAAAEQEVAEIQEQFQSGLVTVGERYNKVIDIWAAANERVAKVMMENLSTEEVINREGNPEKQSSFNSIFMMADSGARGSAAQIRQLAGMRGLMARPDGSIIETPITANFREGLNVLQYFISTHGARKGLADTALKTANSGYLTRRLVDVAQDLVIVEDDCGTHEGIVMSPLIEGGDEKVPLRELVLGRVAAEDVLKPGTEEVLIPRNTLIDEQWCNIIDENSVDSIKVRSVVTCDTDFGVCAKCYGRDLARGHLINQGEAVGVIAAQSIGEPGTQLTMRTFHIGGAASAAAKESSVQVKNNGTIRLANVKFVTNNEGKLVLTSRNTELTVIDAFGRTKEHYKLPYGTTLNKADGAEVTAGEIVANWDPHTMPVISEVAGFVKFVDIVDGLTVSRQTDELTGLSSILVQDVGERATAGKDLRPAIKLVDAQGNDILIEGTDVAAQYFLPGKAIVTLDDGAEINVGDPLARIPQESVGTKDITGGLPRVADLFEARKPKEPAILAEISGIVSFGKETKGKRRLLITPTDGGETYEEMIPKWRQLNVFEGEMVQRGDLISDGAETPHDILRLRGVHAVTEYIVNEVQEVYRLQGVKINDKHIEVIVRQMLRKAIITNAYDSEFLEGEQVEVARIKIVNRKREAEGKPLVEFERELLGITKASLATESFISAASFQETTRVLTEAAVAGKRDELRGLKENVIVGRLIPAGTGFAYHQNRAKNRHNALAAEQAVKFSAADEAEIDAEFNMIADDPTSSLAEMLNMADEE</sequence>
<name>RPOC_ACTSZ</name>
<comment type="function">
    <text evidence="1">DNA-dependent RNA polymerase catalyzes the transcription of DNA into RNA using the four ribonucleoside triphosphates as substrates.</text>
</comment>
<comment type="catalytic activity">
    <reaction evidence="1">
        <text>RNA(n) + a ribonucleoside 5'-triphosphate = RNA(n+1) + diphosphate</text>
        <dbReference type="Rhea" id="RHEA:21248"/>
        <dbReference type="Rhea" id="RHEA-COMP:14527"/>
        <dbReference type="Rhea" id="RHEA-COMP:17342"/>
        <dbReference type="ChEBI" id="CHEBI:33019"/>
        <dbReference type="ChEBI" id="CHEBI:61557"/>
        <dbReference type="ChEBI" id="CHEBI:140395"/>
        <dbReference type="EC" id="2.7.7.6"/>
    </reaction>
</comment>
<comment type="cofactor">
    <cofactor evidence="1">
        <name>Mg(2+)</name>
        <dbReference type="ChEBI" id="CHEBI:18420"/>
    </cofactor>
    <text evidence="1">Binds 1 Mg(2+) ion per subunit.</text>
</comment>
<comment type="cofactor">
    <cofactor evidence="1">
        <name>Zn(2+)</name>
        <dbReference type="ChEBI" id="CHEBI:29105"/>
    </cofactor>
    <text evidence="1">Binds 2 Zn(2+) ions per subunit.</text>
</comment>
<comment type="subunit">
    <text evidence="1">The RNAP catalytic core consists of 2 alpha, 1 beta, 1 beta' and 1 omega subunit. When a sigma factor is associated with the core the holoenzyme is formed, which can initiate transcription.</text>
</comment>
<comment type="similarity">
    <text evidence="1">Belongs to the RNA polymerase beta' chain family.</text>
</comment>
<evidence type="ECO:0000255" key="1">
    <source>
        <dbReference type="HAMAP-Rule" id="MF_01322"/>
    </source>
</evidence>
<protein>
    <recommendedName>
        <fullName evidence="1">DNA-directed RNA polymerase subunit beta'</fullName>
        <shortName evidence="1">RNAP subunit beta'</shortName>
        <ecNumber evidence="1">2.7.7.6</ecNumber>
    </recommendedName>
    <alternativeName>
        <fullName evidence="1">RNA polymerase subunit beta'</fullName>
    </alternativeName>
    <alternativeName>
        <fullName evidence="1">Transcriptase subunit beta'</fullName>
    </alternativeName>
</protein>
<gene>
    <name evidence="1" type="primary">rpoC</name>
    <name type="ordered locus">Asuc_0040</name>
</gene>
<keyword id="KW-0240">DNA-directed RNA polymerase</keyword>
<keyword id="KW-0460">Magnesium</keyword>
<keyword id="KW-0479">Metal-binding</keyword>
<keyword id="KW-0548">Nucleotidyltransferase</keyword>
<keyword id="KW-1185">Reference proteome</keyword>
<keyword id="KW-0804">Transcription</keyword>
<keyword id="KW-0808">Transferase</keyword>
<keyword id="KW-0862">Zinc</keyword>
<proteinExistence type="inferred from homology"/>